<comment type="function">
    <text evidence="1">Catalyzes the hydrolysis of UDP-3-O-myristoyl-N-acetylglucosamine to form UDP-3-O-myristoylglucosamine and acetate, the committed step in lipid A biosynthesis.</text>
</comment>
<comment type="catalytic activity">
    <reaction evidence="1">
        <text>a UDP-3-O-[(3R)-3-hydroxyacyl]-N-acetyl-alpha-D-glucosamine + H2O = a UDP-3-O-[(3R)-3-hydroxyacyl]-alpha-D-glucosamine + acetate</text>
        <dbReference type="Rhea" id="RHEA:67816"/>
        <dbReference type="ChEBI" id="CHEBI:15377"/>
        <dbReference type="ChEBI" id="CHEBI:30089"/>
        <dbReference type="ChEBI" id="CHEBI:137740"/>
        <dbReference type="ChEBI" id="CHEBI:173225"/>
        <dbReference type="EC" id="3.5.1.108"/>
    </reaction>
</comment>
<comment type="cofactor">
    <cofactor evidence="1">
        <name>Zn(2+)</name>
        <dbReference type="ChEBI" id="CHEBI:29105"/>
    </cofactor>
</comment>
<comment type="pathway">
    <text evidence="1">Glycolipid biosynthesis; lipid IV(A) biosynthesis; lipid IV(A) from (3R)-3-hydroxytetradecanoyl-[acyl-carrier-protein] and UDP-N-acetyl-alpha-D-glucosamine: step 2/6.</text>
</comment>
<comment type="similarity">
    <text evidence="1">Belongs to the LpxC family.</text>
</comment>
<dbReference type="EC" id="3.5.1.108" evidence="1"/>
<dbReference type="EMBL" id="CP001614">
    <property type="protein sequence ID" value="ACR12897.1"/>
    <property type="molecule type" value="Genomic_DNA"/>
</dbReference>
<dbReference type="RefSeq" id="WP_015819010.1">
    <property type="nucleotide sequence ID" value="NC_012997.1"/>
</dbReference>
<dbReference type="SMR" id="C5BP28"/>
<dbReference type="STRING" id="377629.TERTU_3043"/>
<dbReference type="KEGG" id="ttu:TERTU_3043"/>
<dbReference type="eggNOG" id="COG0774">
    <property type="taxonomic scope" value="Bacteria"/>
</dbReference>
<dbReference type="HOGENOM" id="CLU_046528_1_0_6"/>
<dbReference type="OrthoDB" id="9802746at2"/>
<dbReference type="UniPathway" id="UPA00359">
    <property type="reaction ID" value="UER00478"/>
</dbReference>
<dbReference type="Proteomes" id="UP000009080">
    <property type="component" value="Chromosome"/>
</dbReference>
<dbReference type="GO" id="GO:0016020">
    <property type="term" value="C:membrane"/>
    <property type="evidence" value="ECO:0007669"/>
    <property type="project" value="GOC"/>
</dbReference>
<dbReference type="GO" id="GO:0046872">
    <property type="term" value="F:metal ion binding"/>
    <property type="evidence" value="ECO:0007669"/>
    <property type="project" value="UniProtKB-KW"/>
</dbReference>
<dbReference type="GO" id="GO:0103117">
    <property type="term" value="F:UDP-3-O-acyl-N-acetylglucosamine deacetylase activity"/>
    <property type="evidence" value="ECO:0007669"/>
    <property type="project" value="UniProtKB-UniRule"/>
</dbReference>
<dbReference type="GO" id="GO:0009245">
    <property type="term" value="P:lipid A biosynthetic process"/>
    <property type="evidence" value="ECO:0007669"/>
    <property type="project" value="UniProtKB-UniRule"/>
</dbReference>
<dbReference type="Gene3D" id="3.30.230.20">
    <property type="entry name" value="lpxc deacetylase, domain 1"/>
    <property type="match status" value="1"/>
</dbReference>
<dbReference type="Gene3D" id="3.30.1700.10">
    <property type="entry name" value="lpxc deacetylase, domain 2"/>
    <property type="match status" value="1"/>
</dbReference>
<dbReference type="HAMAP" id="MF_00388">
    <property type="entry name" value="LpxC"/>
    <property type="match status" value="1"/>
</dbReference>
<dbReference type="InterPro" id="IPR020568">
    <property type="entry name" value="Ribosomal_Su5_D2-typ_SF"/>
</dbReference>
<dbReference type="InterPro" id="IPR004463">
    <property type="entry name" value="UDP-acyl_GlcNac_deAcase"/>
</dbReference>
<dbReference type="InterPro" id="IPR011334">
    <property type="entry name" value="UDP-acyl_GlcNac_deAcase_C"/>
</dbReference>
<dbReference type="InterPro" id="IPR015870">
    <property type="entry name" value="UDP-acyl_N-AcGlcN_deAcase_N"/>
</dbReference>
<dbReference type="NCBIfam" id="TIGR00325">
    <property type="entry name" value="lpxC"/>
    <property type="match status" value="1"/>
</dbReference>
<dbReference type="PANTHER" id="PTHR33694">
    <property type="entry name" value="UDP-3-O-ACYL-N-ACETYLGLUCOSAMINE DEACETYLASE 1, MITOCHONDRIAL-RELATED"/>
    <property type="match status" value="1"/>
</dbReference>
<dbReference type="PANTHER" id="PTHR33694:SF1">
    <property type="entry name" value="UDP-3-O-ACYL-N-ACETYLGLUCOSAMINE DEACETYLASE 1, MITOCHONDRIAL-RELATED"/>
    <property type="match status" value="1"/>
</dbReference>
<dbReference type="Pfam" id="PF03331">
    <property type="entry name" value="LpxC"/>
    <property type="match status" value="1"/>
</dbReference>
<dbReference type="SUPFAM" id="SSF54211">
    <property type="entry name" value="Ribosomal protein S5 domain 2-like"/>
    <property type="match status" value="2"/>
</dbReference>
<reference key="1">
    <citation type="journal article" date="2009" name="PLoS ONE">
        <title>The complete genome of Teredinibacter turnerae T7901: an intracellular endosymbiont of marine wood-boring bivalves (shipworms).</title>
        <authorList>
            <person name="Yang J.C."/>
            <person name="Madupu R."/>
            <person name="Durkin A.S."/>
            <person name="Ekborg N.A."/>
            <person name="Pedamallu C.S."/>
            <person name="Hostetler J.B."/>
            <person name="Radune D."/>
            <person name="Toms B.S."/>
            <person name="Henrissat B."/>
            <person name="Coutinho P.M."/>
            <person name="Schwarz S."/>
            <person name="Field L."/>
            <person name="Trindade-Silva A.E."/>
            <person name="Soares C.A.G."/>
            <person name="Elshahawi S."/>
            <person name="Hanora A."/>
            <person name="Schmidt E.W."/>
            <person name="Haygood M.G."/>
            <person name="Posfai J."/>
            <person name="Benner J."/>
            <person name="Madinger C."/>
            <person name="Nove J."/>
            <person name="Anton B."/>
            <person name="Chaudhary K."/>
            <person name="Foster J."/>
            <person name="Holman A."/>
            <person name="Kumar S."/>
            <person name="Lessard P.A."/>
            <person name="Luyten Y.A."/>
            <person name="Slatko B."/>
            <person name="Wood N."/>
            <person name="Wu B."/>
            <person name="Teplitski M."/>
            <person name="Mougous J.D."/>
            <person name="Ward N."/>
            <person name="Eisen J.A."/>
            <person name="Badger J.H."/>
            <person name="Distel D.L."/>
        </authorList>
    </citation>
    <scope>NUCLEOTIDE SEQUENCE [LARGE SCALE GENOMIC DNA]</scope>
    <source>
        <strain>ATCC 39867 / T7901</strain>
    </source>
</reference>
<organism>
    <name type="scientific">Teredinibacter turnerae (strain ATCC 39867 / T7901)</name>
    <dbReference type="NCBI Taxonomy" id="377629"/>
    <lineage>
        <taxon>Bacteria</taxon>
        <taxon>Pseudomonadati</taxon>
        <taxon>Pseudomonadota</taxon>
        <taxon>Gammaproteobacteria</taxon>
        <taxon>Cellvibrionales</taxon>
        <taxon>Cellvibrionaceae</taxon>
        <taxon>Teredinibacter</taxon>
    </lineage>
</organism>
<sequence>MIKQRTLKNEIRATGVGLHTGQKVYLTLRPAPIDAGIVFRRVDLSPAVDIPAHAENVGDTTLSTTLVNGDVRVSTVEHLMSAMAGLGIDNAIVEVSADEVPIMDGSAGPFVFLIQSAGIQEQNAPKKFIRIKKKVVVKDGEKEAAFYPFNGFKVSFGIDFDHPVFKGRKLDATIDFSSTSFVKEISRARTFGFMHEIEYLRSKGLVKGGSLDNAVVVDKYRIMNEDGLRYDDEFVKHKVLDAIGDLYLLGTSLIGEYRAYKSGHGLNNQVLRELMKREDAWELVTFDEEETAPISYIKPLLAV</sequence>
<feature type="chain" id="PRO_1000205809" description="UDP-3-O-acyl-N-acetylglucosamine deacetylase">
    <location>
        <begin position="1"/>
        <end position="303"/>
    </location>
</feature>
<feature type="active site" description="Proton donor" evidence="1">
    <location>
        <position position="264"/>
    </location>
</feature>
<feature type="binding site" evidence="1">
    <location>
        <position position="78"/>
    </location>
    <ligand>
        <name>Zn(2+)</name>
        <dbReference type="ChEBI" id="CHEBI:29105"/>
    </ligand>
</feature>
<feature type="binding site" evidence="1">
    <location>
        <position position="237"/>
    </location>
    <ligand>
        <name>Zn(2+)</name>
        <dbReference type="ChEBI" id="CHEBI:29105"/>
    </ligand>
</feature>
<feature type="binding site" evidence="1">
    <location>
        <position position="241"/>
    </location>
    <ligand>
        <name>Zn(2+)</name>
        <dbReference type="ChEBI" id="CHEBI:29105"/>
    </ligand>
</feature>
<gene>
    <name evidence="1" type="primary">lpxC</name>
    <name type="ordered locus">TERTU_3043</name>
</gene>
<name>LPXC_TERTT</name>
<proteinExistence type="inferred from homology"/>
<evidence type="ECO:0000255" key="1">
    <source>
        <dbReference type="HAMAP-Rule" id="MF_00388"/>
    </source>
</evidence>
<protein>
    <recommendedName>
        <fullName evidence="1">UDP-3-O-acyl-N-acetylglucosamine deacetylase</fullName>
        <shortName evidence="1">UDP-3-O-acyl-GlcNAc deacetylase</shortName>
        <ecNumber evidence="1">3.5.1.108</ecNumber>
    </recommendedName>
    <alternativeName>
        <fullName evidence="1">UDP-3-O-[R-3-hydroxymyristoyl]-N-acetylglucosamine deacetylase</fullName>
    </alternativeName>
</protein>
<accession>C5BP28</accession>
<keyword id="KW-0378">Hydrolase</keyword>
<keyword id="KW-0441">Lipid A biosynthesis</keyword>
<keyword id="KW-0444">Lipid biosynthesis</keyword>
<keyword id="KW-0443">Lipid metabolism</keyword>
<keyword id="KW-0479">Metal-binding</keyword>
<keyword id="KW-1185">Reference proteome</keyword>
<keyword id="KW-0862">Zinc</keyword>